<comment type="function">
    <text evidence="6">NDH shuttles electrons from NAD(P)H:plastoquinone, via FMN and iron-sulfur (Fe-S) centers, to quinones in the photosynthetic chain and possibly in a chloroplast respiratory chain. The immediate electron acceptor for the enzyme in this species is believed to be plastoquinone. Couples the redox reaction to proton translocation, and thus conserves the redox energy in a proton gradient.</text>
</comment>
<comment type="catalytic activity">
    <reaction evidence="6">
        <text>a plastoquinone + NADH + (n+1) H(+)(in) = a plastoquinol + NAD(+) + n H(+)(out)</text>
        <dbReference type="Rhea" id="RHEA:42608"/>
        <dbReference type="Rhea" id="RHEA-COMP:9561"/>
        <dbReference type="Rhea" id="RHEA-COMP:9562"/>
        <dbReference type="ChEBI" id="CHEBI:15378"/>
        <dbReference type="ChEBI" id="CHEBI:17757"/>
        <dbReference type="ChEBI" id="CHEBI:57540"/>
        <dbReference type="ChEBI" id="CHEBI:57945"/>
        <dbReference type="ChEBI" id="CHEBI:62192"/>
    </reaction>
</comment>
<comment type="catalytic activity">
    <reaction evidence="6">
        <text>a plastoquinone + NADPH + (n+1) H(+)(in) = a plastoquinol + NADP(+) + n H(+)(out)</text>
        <dbReference type="Rhea" id="RHEA:42612"/>
        <dbReference type="Rhea" id="RHEA-COMP:9561"/>
        <dbReference type="Rhea" id="RHEA-COMP:9562"/>
        <dbReference type="ChEBI" id="CHEBI:15378"/>
        <dbReference type="ChEBI" id="CHEBI:17757"/>
        <dbReference type="ChEBI" id="CHEBI:57783"/>
        <dbReference type="ChEBI" id="CHEBI:58349"/>
        <dbReference type="ChEBI" id="CHEBI:62192"/>
    </reaction>
</comment>
<comment type="subunit">
    <text evidence="2 3">Part of the chloroplast NDH complex, composed of a mixture of chloroplast and nucleus encoded subunits. Component of the NDH subcomplex A, at least composed of ndhH, ndhI, ndhJ, ndhK, ndhL, ndhM, ndhN and ndhO.</text>
</comment>
<comment type="subcellular location">
    <subcellularLocation>
        <location evidence="2">Plastid</location>
        <location evidence="2">Chloroplast thylakoid membrane</location>
        <topology evidence="1">Multi-pass membrane protein</topology>
    </subcellularLocation>
</comment>
<comment type="disruption phenotype">
    <text evidence="2">Malfunction of the NDH complex.</text>
</comment>
<comment type="similarity">
    <text evidence="6">Belongs to the NDH complex subunit L family.</text>
</comment>
<comment type="sequence caution" evidence="6">
    <conflict type="erroneous gene model prediction">
        <sequence resource="EMBL-CDS" id="AAD55491"/>
    </conflict>
</comment>
<dbReference type="EC" id="7.1.1.-" evidence="6"/>
<dbReference type="EMBL" id="AC008148">
    <property type="protein sequence ID" value="AAD55491.1"/>
    <property type="status" value="ALT_SEQ"/>
    <property type="molecule type" value="Genomic_DNA"/>
</dbReference>
<dbReference type="EMBL" id="AC011663">
    <property type="protein sequence ID" value="AAG52336.1"/>
    <property type="molecule type" value="Genomic_DNA"/>
</dbReference>
<dbReference type="EMBL" id="CP002684">
    <property type="protein sequence ID" value="AEE35111.1"/>
    <property type="molecule type" value="Genomic_DNA"/>
</dbReference>
<dbReference type="EMBL" id="BT010638">
    <property type="protein sequence ID" value="AAQ89660.1"/>
    <property type="molecule type" value="mRNA"/>
</dbReference>
<dbReference type="EMBL" id="AK229819">
    <property type="protein sequence ID" value="BAF01650.1"/>
    <property type="molecule type" value="mRNA"/>
</dbReference>
<dbReference type="PIR" id="B96732">
    <property type="entry name" value="B96732"/>
</dbReference>
<dbReference type="RefSeq" id="NP_177233.1">
    <property type="nucleotide sequence ID" value="NM_105744.4"/>
</dbReference>
<dbReference type="PDB" id="7WFG">
    <property type="method" value="EM"/>
    <property type="resolution" value="4.33 A"/>
    <property type="chains" value="L=1-191"/>
</dbReference>
<dbReference type="PDB" id="7WG5">
    <property type="method" value="EM"/>
    <property type="resolution" value="3.89 A"/>
    <property type="chains" value="L=1-191"/>
</dbReference>
<dbReference type="PDBsum" id="7WFG"/>
<dbReference type="PDBsum" id="7WG5"/>
<dbReference type="EMDB" id="EMD-32465"/>
<dbReference type="EMDB" id="EMD-32477"/>
<dbReference type="SMR" id="Q9CAC5"/>
<dbReference type="FunCoup" id="Q9CAC5">
    <property type="interactions" value="712"/>
</dbReference>
<dbReference type="IntAct" id="Q9CAC5">
    <property type="interactions" value="43"/>
</dbReference>
<dbReference type="STRING" id="3702.Q9CAC5"/>
<dbReference type="TCDB" id="3.D.1.8.1">
    <property type="family name" value="the h+ or na+-translocating nadh dehydrogenase (ndh) family"/>
</dbReference>
<dbReference type="GlyGen" id="Q9CAC5">
    <property type="glycosylation" value="1 site"/>
</dbReference>
<dbReference type="PaxDb" id="3702-AT1G70760.1"/>
<dbReference type="ProteomicsDB" id="251126"/>
<dbReference type="EnsemblPlants" id="AT1G70760.1">
    <property type="protein sequence ID" value="AT1G70760.1"/>
    <property type="gene ID" value="AT1G70760"/>
</dbReference>
<dbReference type="GeneID" id="843413"/>
<dbReference type="Gramene" id="AT1G70760.1">
    <property type="protein sequence ID" value="AT1G70760.1"/>
    <property type="gene ID" value="AT1G70760"/>
</dbReference>
<dbReference type="KEGG" id="ath:AT1G70760"/>
<dbReference type="Araport" id="AT1G70760"/>
<dbReference type="TAIR" id="AT1G70760">
    <property type="gene designation" value="NDHL"/>
</dbReference>
<dbReference type="eggNOG" id="ENOG502S0BN">
    <property type="taxonomic scope" value="Eukaryota"/>
</dbReference>
<dbReference type="HOGENOM" id="CLU_103108_1_0_1"/>
<dbReference type="InParanoid" id="Q9CAC5"/>
<dbReference type="OMA" id="KYPWATE"/>
<dbReference type="OrthoDB" id="2016985at2759"/>
<dbReference type="PhylomeDB" id="Q9CAC5"/>
<dbReference type="PRO" id="PR:Q9CAC5"/>
<dbReference type="Proteomes" id="UP000006548">
    <property type="component" value="Chromosome 1"/>
</dbReference>
<dbReference type="ExpressionAtlas" id="Q9CAC5">
    <property type="expression patterns" value="baseline and differential"/>
</dbReference>
<dbReference type="GO" id="GO:0009535">
    <property type="term" value="C:chloroplast thylakoid membrane"/>
    <property type="evidence" value="ECO:0000314"/>
    <property type="project" value="UniProtKB"/>
</dbReference>
<dbReference type="GO" id="GO:0010598">
    <property type="term" value="C:NAD(P)H dehydrogenase complex (plastoquinone)"/>
    <property type="evidence" value="ECO:0000314"/>
    <property type="project" value="UniProtKB"/>
</dbReference>
<dbReference type="GO" id="GO:0042651">
    <property type="term" value="C:thylakoid membrane"/>
    <property type="evidence" value="ECO:0000314"/>
    <property type="project" value="TAIR"/>
</dbReference>
<dbReference type="GO" id="GO:0016655">
    <property type="term" value="F:oxidoreductase activity, acting on NAD(P)H, quinone or similar compound as acceptor"/>
    <property type="evidence" value="ECO:0007669"/>
    <property type="project" value="InterPro"/>
</dbReference>
<dbReference type="GO" id="GO:0048038">
    <property type="term" value="F:quinone binding"/>
    <property type="evidence" value="ECO:0007669"/>
    <property type="project" value="UniProtKB-KW"/>
</dbReference>
<dbReference type="GO" id="GO:0010258">
    <property type="term" value="P:NADH dehydrogenase complex (plastoquinone) assembly"/>
    <property type="evidence" value="ECO:0000315"/>
    <property type="project" value="UniProtKB"/>
</dbReference>
<dbReference type="GO" id="GO:0009773">
    <property type="term" value="P:photosynthetic electron transport in photosystem I"/>
    <property type="evidence" value="ECO:0000304"/>
    <property type="project" value="TAIR"/>
</dbReference>
<dbReference type="InterPro" id="IPR019654">
    <property type="entry name" value="NADH-quinone_OxRdatse_su_L"/>
</dbReference>
<dbReference type="PANTHER" id="PTHR36727">
    <property type="entry name" value="NAD(P)H-QUINONE OXIDOREDUCTASE SUBUNIT L, CHLOROPLASTIC"/>
    <property type="match status" value="1"/>
</dbReference>
<dbReference type="PANTHER" id="PTHR36727:SF2">
    <property type="entry name" value="NAD(P)H-QUINONE OXIDOREDUCTASE SUBUNIT L, CHLOROPLASTIC"/>
    <property type="match status" value="1"/>
</dbReference>
<dbReference type="Pfam" id="PF10716">
    <property type="entry name" value="NdhL"/>
    <property type="match status" value="1"/>
</dbReference>
<keyword id="KW-0002">3D-structure</keyword>
<keyword id="KW-0150">Chloroplast</keyword>
<keyword id="KW-0472">Membrane</keyword>
<keyword id="KW-0520">NAD</keyword>
<keyword id="KW-0521">NADP</keyword>
<keyword id="KW-0934">Plastid</keyword>
<keyword id="KW-0618">Plastoquinone</keyword>
<keyword id="KW-0874">Quinone</keyword>
<keyword id="KW-1185">Reference proteome</keyword>
<keyword id="KW-0793">Thylakoid</keyword>
<keyword id="KW-0809">Transit peptide</keyword>
<keyword id="KW-1278">Translocase</keyword>
<keyword id="KW-0812">Transmembrane</keyword>
<keyword id="KW-1133">Transmembrane helix</keyword>
<keyword id="KW-0813">Transport</keyword>
<name>NDHL_ARATH</name>
<sequence length="191" mass="21963">MSRCGSLGLYAPNALPSLSLKPRSVKSPFCITSHTKPNDTLLHNVNKMRAKACDILGAKKTILAAQLGAVLATIDHPALAITGVNNQQELSSVVLDIGIISVWYFLVMPPIIMNWLRVRWYRRKFFEMYLQFMFVFMFFPGLLLWAPFLNFRKFPRDPNMKNPWDKPTDPDSIKNVYLKYPYATPEDYDLD</sequence>
<protein>
    <recommendedName>
        <fullName>NAD(P)H-quinone oxidoreductase subunit L, chloroplastic</fullName>
        <ecNumber evidence="6">7.1.1.-</ecNumber>
    </recommendedName>
    <alternativeName>
        <fullName evidence="5">NAD(P)H dehydrogenase subunit L</fullName>
        <shortName evidence="6">NDH subunit L</shortName>
        <shortName evidence="6">NDH-L</shortName>
    </alternativeName>
    <alternativeName>
        <fullName evidence="6">NADH-plastoquinone oxidoreductase subunit L</fullName>
    </alternativeName>
    <alternativeName>
        <fullName evidence="4">Protein CHLORORESPIRATORY REDUCTION 23</fullName>
    </alternativeName>
</protein>
<feature type="transit peptide" description="Chloroplast" evidence="1">
    <location>
        <begin position="1"/>
        <end position="46"/>
    </location>
</feature>
<feature type="chain" id="PRO_0000431813" description="NAD(P)H-quinone oxidoreductase subunit L, chloroplastic">
    <location>
        <begin position="47"/>
        <end position="191"/>
    </location>
</feature>
<feature type="transmembrane region" description="Helical; Name=1" evidence="1">
    <location>
        <begin position="61"/>
        <end position="81"/>
    </location>
</feature>
<feature type="transmembrane region" description="Helical; Name=2" evidence="1">
    <location>
        <begin position="93"/>
        <end position="113"/>
    </location>
</feature>
<feature type="transmembrane region" description="Helical; Name=3" evidence="1">
    <location>
        <begin position="129"/>
        <end position="149"/>
    </location>
</feature>
<reference key="1">
    <citation type="journal article" date="2000" name="Nature">
        <title>Sequence and analysis of chromosome 1 of the plant Arabidopsis thaliana.</title>
        <authorList>
            <person name="Theologis A."/>
            <person name="Ecker J.R."/>
            <person name="Palm C.J."/>
            <person name="Federspiel N.A."/>
            <person name="Kaul S."/>
            <person name="White O."/>
            <person name="Alonso J."/>
            <person name="Altafi H."/>
            <person name="Araujo R."/>
            <person name="Bowman C.L."/>
            <person name="Brooks S.Y."/>
            <person name="Buehler E."/>
            <person name="Chan A."/>
            <person name="Chao Q."/>
            <person name="Chen H."/>
            <person name="Cheuk R.F."/>
            <person name="Chin C.W."/>
            <person name="Chung M.K."/>
            <person name="Conn L."/>
            <person name="Conway A.B."/>
            <person name="Conway A.R."/>
            <person name="Creasy T.H."/>
            <person name="Dewar K."/>
            <person name="Dunn P."/>
            <person name="Etgu P."/>
            <person name="Feldblyum T.V."/>
            <person name="Feng J.-D."/>
            <person name="Fong B."/>
            <person name="Fujii C.Y."/>
            <person name="Gill J.E."/>
            <person name="Goldsmith A.D."/>
            <person name="Haas B."/>
            <person name="Hansen N.F."/>
            <person name="Hughes B."/>
            <person name="Huizar L."/>
            <person name="Hunter J.L."/>
            <person name="Jenkins J."/>
            <person name="Johnson-Hopson C."/>
            <person name="Khan S."/>
            <person name="Khaykin E."/>
            <person name="Kim C.J."/>
            <person name="Koo H.L."/>
            <person name="Kremenetskaia I."/>
            <person name="Kurtz D.B."/>
            <person name="Kwan A."/>
            <person name="Lam B."/>
            <person name="Langin-Hooper S."/>
            <person name="Lee A."/>
            <person name="Lee J.M."/>
            <person name="Lenz C.A."/>
            <person name="Li J.H."/>
            <person name="Li Y.-P."/>
            <person name="Lin X."/>
            <person name="Liu S.X."/>
            <person name="Liu Z.A."/>
            <person name="Luros J.S."/>
            <person name="Maiti R."/>
            <person name="Marziali A."/>
            <person name="Militscher J."/>
            <person name="Miranda M."/>
            <person name="Nguyen M."/>
            <person name="Nierman W.C."/>
            <person name="Osborne B.I."/>
            <person name="Pai G."/>
            <person name="Peterson J."/>
            <person name="Pham P.K."/>
            <person name="Rizzo M."/>
            <person name="Rooney T."/>
            <person name="Rowley D."/>
            <person name="Sakano H."/>
            <person name="Salzberg S.L."/>
            <person name="Schwartz J.R."/>
            <person name="Shinn P."/>
            <person name="Southwick A.M."/>
            <person name="Sun H."/>
            <person name="Tallon L.J."/>
            <person name="Tambunga G."/>
            <person name="Toriumi M.J."/>
            <person name="Town C.D."/>
            <person name="Utterback T."/>
            <person name="Van Aken S."/>
            <person name="Vaysberg M."/>
            <person name="Vysotskaia V.S."/>
            <person name="Walker M."/>
            <person name="Wu D."/>
            <person name="Yu G."/>
            <person name="Fraser C.M."/>
            <person name="Venter J.C."/>
            <person name="Davis R.W."/>
        </authorList>
    </citation>
    <scope>NUCLEOTIDE SEQUENCE [LARGE SCALE GENOMIC DNA]</scope>
    <source>
        <strain>cv. Columbia</strain>
    </source>
</reference>
<reference key="2">
    <citation type="journal article" date="2017" name="Plant J.">
        <title>Araport11: a complete reannotation of the Arabidopsis thaliana reference genome.</title>
        <authorList>
            <person name="Cheng C.Y."/>
            <person name="Krishnakumar V."/>
            <person name="Chan A.P."/>
            <person name="Thibaud-Nissen F."/>
            <person name="Schobel S."/>
            <person name="Town C.D."/>
        </authorList>
    </citation>
    <scope>GENOME REANNOTATION</scope>
    <source>
        <strain>cv. Columbia</strain>
    </source>
</reference>
<reference key="3">
    <citation type="submission" date="2003-10" db="EMBL/GenBank/DDBJ databases">
        <title>Arabidopsis ORF clones.</title>
        <authorList>
            <person name="Cheuk R.F."/>
            <person name="Chen H."/>
            <person name="Kim C.J."/>
            <person name="Shinn P."/>
            <person name="Carninci P."/>
            <person name="Hayashizaki Y."/>
            <person name="Ishida J."/>
            <person name="Kamiya A."/>
            <person name="Kawai J."/>
            <person name="Narusaka M."/>
            <person name="Sakurai T."/>
            <person name="Satou M."/>
            <person name="Seki M."/>
            <person name="Shinozaki K."/>
            <person name="Ecker J.R."/>
        </authorList>
    </citation>
    <scope>NUCLEOTIDE SEQUENCE [LARGE SCALE MRNA]</scope>
    <source>
        <strain>cv. Columbia</strain>
    </source>
</reference>
<reference key="4">
    <citation type="submission" date="2006-07" db="EMBL/GenBank/DDBJ databases">
        <title>Large-scale analysis of RIKEN Arabidopsis full-length (RAFL) cDNAs.</title>
        <authorList>
            <person name="Totoki Y."/>
            <person name="Seki M."/>
            <person name="Ishida J."/>
            <person name="Nakajima M."/>
            <person name="Enju A."/>
            <person name="Kamiya A."/>
            <person name="Narusaka M."/>
            <person name="Shin-i T."/>
            <person name="Nakagawa M."/>
            <person name="Sakamoto N."/>
            <person name="Oishi K."/>
            <person name="Kohara Y."/>
            <person name="Kobayashi M."/>
            <person name="Toyoda A."/>
            <person name="Sakaki Y."/>
            <person name="Sakurai T."/>
            <person name="Iida K."/>
            <person name="Akiyama K."/>
            <person name="Satou M."/>
            <person name="Toyoda T."/>
            <person name="Konagaya A."/>
            <person name="Carninci P."/>
            <person name="Kawai J."/>
            <person name="Hayashizaki Y."/>
            <person name="Shinozaki K."/>
        </authorList>
    </citation>
    <scope>NUCLEOTIDE SEQUENCE [LARGE SCALE MRNA] OF 5-191</scope>
    <source>
        <strain>cv. Columbia</strain>
    </source>
</reference>
<reference key="5">
    <citation type="journal article" date="2008" name="Plant Cell Physiol.">
        <title>CRR23/NdhL is a subunit of the chloroplast NAD(P)H dehydrogenase complex in Arabidopsis.</title>
        <authorList>
            <person name="Shimizu H."/>
            <person name="Peng L."/>
            <person name="Myouga F."/>
            <person name="Motohashi R."/>
            <person name="Shinozaki K."/>
            <person name="Shikanai T."/>
        </authorList>
    </citation>
    <scope>COMPONENT OF THE NDH COMPLEX</scope>
    <scope>DISRUPTION PHENOTYPE</scope>
    <scope>SUBCELLULAR LOCATION</scope>
</reference>
<reference key="6">
    <citation type="journal article" date="2009" name="Mol. Plant">
        <title>Towards characterization of the chloroplast NAD(P)H dehydrogenase complex.</title>
        <authorList>
            <person name="Suorsa M."/>
            <person name="Sirpioe S."/>
            <person name="Aro E.M."/>
        </authorList>
    </citation>
    <scope>REVIEW</scope>
</reference>
<reference key="7">
    <citation type="journal article" date="2011" name="Biochim. Biophys. Acta">
        <title>Structure and biogenesis of the chloroplast NAD(P)H dehydrogenase complex.</title>
        <authorList>
            <person name="Peng L."/>
            <person name="Yamamoto H."/>
            <person name="Shikanai T."/>
        </authorList>
    </citation>
    <scope>REVIEW</scope>
</reference>
<reference key="8">
    <citation type="journal article" date="2011" name="Plant Cell Physiol.">
        <title>Structure of the chloroplast NADH dehydrogenase-like complex: nomenclature for nuclear-encoded subunits.</title>
        <authorList>
            <person name="Ifuku K."/>
            <person name="Endo T."/>
            <person name="Shikanai T."/>
            <person name="Aro E.M."/>
        </authorList>
    </citation>
    <scope>NOMENCLATURE</scope>
    <scope>COMPONENT OF THE NDH COMPLEX</scope>
</reference>
<accession>Q9CAC5</accession>
<accession>Q0WMK1</accession>
<accession>Q9SSL2</accession>
<evidence type="ECO:0000255" key="1"/>
<evidence type="ECO:0000269" key="2">
    <source>
    </source>
</evidence>
<evidence type="ECO:0000269" key="3">
    <source>
    </source>
</evidence>
<evidence type="ECO:0000303" key="4">
    <source>
    </source>
</evidence>
<evidence type="ECO:0000303" key="5">
    <source>
    </source>
</evidence>
<evidence type="ECO:0000305" key="6"/>
<evidence type="ECO:0000312" key="7">
    <source>
        <dbReference type="Araport" id="AT1G70760"/>
    </source>
</evidence>
<evidence type="ECO:0000312" key="8">
    <source>
        <dbReference type="EMBL" id="AAD55491.1"/>
    </source>
</evidence>
<evidence type="ECO:0000312" key="9">
    <source>
        <dbReference type="EMBL" id="AAG52336.1"/>
    </source>
</evidence>
<proteinExistence type="evidence at protein level"/>
<gene>
    <name evidence="5" type="primary">ndhL</name>
    <name evidence="4" type="synonym">CRR23</name>
    <name evidence="6" type="synonym">NDH-L</name>
    <name evidence="7" type="ordered locus">At1g70760</name>
    <name evidence="8" type="ORF">F15H11.1</name>
    <name evidence="9" type="ORF">F5A18.6</name>
</gene>
<organism>
    <name type="scientific">Arabidopsis thaliana</name>
    <name type="common">Mouse-ear cress</name>
    <dbReference type="NCBI Taxonomy" id="3702"/>
    <lineage>
        <taxon>Eukaryota</taxon>
        <taxon>Viridiplantae</taxon>
        <taxon>Streptophyta</taxon>
        <taxon>Embryophyta</taxon>
        <taxon>Tracheophyta</taxon>
        <taxon>Spermatophyta</taxon>
        <taxon>Magnoliopsida</taxon>
        <taxon>eudicotyledons</taxon>
        <taxon>Gunneridae</taxon>
        <taxon>Pentapetalae</taxon>
        <taxon>rosids</taxon>
        <taxon>malvids</taxon>
        <taxon>Brassicales</taxon>
        <taxon>Brassicaceae</taxon>
        <taxon>Camelineae</taxon>
        <taxon>Arabidopsis</taxon>
    </lineage>
</organism>